<proteinExistence type="evidence at protein level"/>
<comment type="function">
    <text evidence="2 5">Component of the protein complex eIF4F, which is involved in the recognition of the mRNA cap, ATP-dependent unwinding of 5'-terminal secondary structure and recruitment of mRNA to the ribosome (By similarity). Recognizes and binds the 7-methylguanosine-containing mRNA cap during an early step in the initiation of protein synthesis and facilitates ribosome binding by inducing the unwinding of the mRNAs secondary structures (By similarity). Key component of recessive resistance to potyviruses (PubMed:12857809).</text>
</comment>
<comment type="function">
    <text evidence="5">(Microbial infection) Susceptibility host factor required for viral infection by recruiting viral RNAs to the host ribosomal complex via an interaction with viral genome-linked protein (VPg).</text>
</comment>
<comment type="subunit">
    <text evidence="2">EIF4F is a multi-subunit complex, the composition of which varies with external and internal environmental conditions. It is composed of at least EIF4A, EIF4E and EIF4G. EIF4E is also known to interact with other partners. In higher plants two isoforms of EIF4F have been identified, named isoform EIF4F and isoform EIF(iso)4F. Isoform EIF4F has subunits p220 and p26, whereas isoform EIF(iso)4F has subunits p82 and p28.</text>
</comment>
<comment type="subunit">
    <text evidence="8">(Microbial infection) Interacts with potyvirus viral genome-linked protein (VPg); this interaction is possible in susceptible hosts but impaired in resistant plants.</text>
</comment>
<comment type="subcellular location">
    <subcellularLocation>
        <location evidence="1">Nucleus</location>
    </subcellularLocation>
    <subcellularLocation>
        <location evidence="1">Cytoplasm</location>
    </subcellularLocation>
</comment>
<comment type="PTM">
    <text evidence="2">According to the redox status, the Cys-133-Cys-171 disulfide bridge may have a role in regulating protein function by affecting its ability to bind capped mRNA.</text>
</comment>
<comment type="polymorphism">
    <text evidence="5">Variant present in the strains cv. Autumn Gold, cv. Desert Storm, cv. Salinas 88 and cv. Vanguard 75, alleles mo1(2) and Ls-eIF4E(2), confers an increased resistance to lettuce mosaic virus (LMV).</text>
</comment>
<comment type="polymorphism">
    <text evidence="5">Variant present in the strains cv. Alize, cv. Classic, cv. Floribibb, cv. Malika, cv. Mantilia, cv. Oriana and cv. Presidio, alleles mo1(1) and Ls-eIF4E(1), confers an increased resistance to lettuce mosaic virus (LMV).</text>
</comment>
<comment type="miscellaneous">
    <text evidence="5">Displayed sequence is from cv. Salinas, cv. Fiona, cv. Girelle, cv. Jessy, cv. Vanguard, cv. Mariska, cv. Trocadero and cv. 87-20M, allele Ls-eIF4E(0), and is associated with susceptibility to lettuce mosaic virus (LMV).</text>
</comment>
<comment type="similarity">
    <text evidence="7">Belongs to the eukaryotic initiation factor 4E family.</text>
</comment>
<sequence length="235" mass="26678">MVEEIMKSEEQKLIDVNKHRGVRSDGEEDEQLEEGEIVGGDADTLSSSSSSRPGTAIAQHPLEHSWTFWFDTPSAKSKQVAWGSSMRPIYTFSSVEEFWSLYNNIHRPSKLAQGADFYCFKNKIEPKWEDPVCANGGKWTMTFTKAKSDTCWLYTLLAMIGEQFDHGDDICGAVVNVRARQEKIALWTKNAANESAQLSIGKQWKEFIDYNDTIGFIFHEDAKTLDRSAKNKYTV</sequence>
<evidence type="ECO:0000250" key="1">
    <source>
        <dbReference type="UniProtKB" id="C6ZJZ3"/>
    </source>
</evidence>
<evidence type="ECO:0000250" key="2">
    <source>
        <dbReference type="UniProtKB" id="P29557"/>
    </source>
</evidence>
<evidence type="ECO:0000250" key="3">
    <source>
        <dbReference type="UniProtKB" id="Q00LS8"/>
    </source>
</evidence>
<evidence type="ECO:0000256" key="4">
    <source>
        <dbReference type="SAM" id="MobiDB-lite"/>
    </source>
</evidence>
<evidence type="ECO:0000269" key="5">
    <source>
    </source>
</evidence>
<evidence type="ECO:0000303" key="6">
    <source>
    </source>
</evidence>
<evidence type="ECO:0000305" key="7"/>
<evidence type="ECO:0000305" key="8">
    <source>
    </source>
</evidence>
<evidence type="ECO:0000312" key="9">
    <source>
        <dbReference type="EMBL" id="PLY83747.1"/>
    </source>
</evidence>
<feature type="chain" id="PRO_0000454070" description="Eukaryotic translation initiation factor 4E-1">
    <location>
        <begin position="1"/>
        <end position="235"/>
    </location>
</feature>
<feature type="region of interest" description="Disordered" evidence="4">
    <location>
        <begin position="16"/>
        <end position="56"/>
    </location>
</feature>
<feature type="region of interest" description="EIF4G-binding" evidence="3">
    <location>
        <begin position="60"/>
        <end position="63"/>
    </location>
</feature>
<feature type="region of interest" description="EIF4G-binding" evidence="3">
    <location>
        <begin position="70"/>
        <end position="106"/>
    </location>
</feature>
<feature type="region of interest" description="EIF4G-binding" evidence="3">
    <location>
        <begin position="154"/>
        <end position="163"/>
    </location>
</feature>
<feature type="compositionally biased region" description="Basic and acidic residues" evidence="4">
    <location>
        <begin position="16"/>
        <end position="25"/>
    </location>
</feature>
<feature type="compositionally biased region" description="Acidic residues" evidence="4">
    <location>
        <begin position="26"/>
        <end position="36"/>
    </location>
</feature>
<feature type="binding site" evidence="2">
    <location>
        <begin position="78"/>
        <end position="83"/>
    </location>
    <ligand>
        <name>mRNA</name>
        <dbReference type="ChEBI" id="CHEBI:33699"/>
    </ligand>
    <ligandPart>
        <name>N(7)-methylguanosine 5'-triphosphate group</name>
        <dbReference type="ChEBI" id="CHEBI:74429"/>
        <note>m7GTP residue in mRNA cap</note>
    </ligandPart>
</feature>
<feature type="binding site" evidence="2">
    <location>
        <position position="110"/>
    </location>
    <ligand>
        <name>mRNA</name>
        <dbReference type="ChEBI" id="CHEBI:33699"/>
    </ligand>
    <ligandPart>
        <name>N(7)-methylguanosine 5'-triphosphate group</name>
        <dbReference type="ChEBI" id="CHEBI:74429"/>
        <note>m7GTP residue in mRNA cap</note>
    </ligandPart>
</feature>
<feature type="binding site" evidence="2">
    <location>
        <begin position="128"/>
        <end position="129"/>
    </location>
    <ligand>
        <name>mRNA</name>
        <dbReference type="ChEBI" id="CHEBI:33699"/>
    </ligand>
    <ligandPart>
        <name>N(7)-methylguanosine 5'-triphosphate group</name>
        <dbReference type="ChEBI" id="CHEBI:74429"/>
        <note>m7GTP residue in mRNA cap</note>
    </ligandPart>
</feature>
<feature type="binding site" evidence="2">
    <location>
        <begin position="178"/>
        <end position="183"/>
    </location>
    <ligand>
        <name>mRNA</name>
        <dbReference type="ChEBI" id="CHEBI:33699"/>
    </ligand>
    <ligandPart>
        <name>N(7)-methylguanosine 5'-triphosphate group</name>
        <dbReference type="ChEBI" id="CHEBI:74429"/>
        <note>m7GTP residue in mRNA cap</note>
    </ligandPart>
</feature>
<feature type="binding site" evidence="3">
    <location>
        <begin position="223"/>
        <end position="227"/>
    </location>
    <ligand>
        <name>mRNA</name>
        <dbReference type="ChEBI" id="CHEBI:33699"/>
    </ligand>
    <ligandPart>
        <name>N(7)-methylguanosine 5'-triphosphate group</name>
        <dbReference type="ChEBI" id="CHEBI:74429"/>
        <note>m7GTP residue in mRNA cap</note>
    </ligandPart>
</feature>
<feature type="disulfide bond" evidence="3">
    <location>
        <begin position="133"/>
        <end position="171"/>
    </location>
</feature>
<feature type="sequence variant" description="In strain: Autumn Gold, Desert Storm, Salinas 88 and Vanguard 75, alleles mo1(2) and Ls-eIF4E(2)." evidence="5">
    <original>A</original>
    <variation>P</variation>
    <location>
        <position position="75"/>
    </location>
</feature>
<feature type="sequence variant" description="In strain: Alize, Classic, Floribibb, Malika, Mantilia, Oriana and Presidio, alleles mo1(1) and Ls-eIF4E(1)." evidence="5">
    <original>QGA</original>
    <variation>H</variation>
    <location>
        <begin position="113"/>
        <end position="115"/>
    </location>
</feature>
<feature type="sequence variant" description="In strain: Alize, Classic, Floribibb, Malika, Mantilia, Oriana and Presidio, alleles mo1(1) and Ls-eIF4E(1)." evidence="5">
    <original>A</original>
    <variation>S</variation>
    <location>
        <position position="191"/>
    </location>
</feature>
<feature type="sequence conflict" description="In Ref. 1; AAP86602." evidence="7" ref="1">
    <original>M</original>
    <variation>G</variation>
    <location>
        <position position="1"/>
    </location>
</feature>
<gene>
    <name evidence="6" type="primary">eIF4E</name>
    <name evidence="9" type="ORF">LSAT_4X27581</name>
</gene>
<protein>
    <recommendedName>
        <fullName evidence="6">Eukaryotic translation initiation factor 4E-1</fullName>
        <shortName evidence="6">Ls-eIF4E-1</shortName>
        <shortName evidence="6">eIF-4E-1</shortName>
    </recommendedName>
    <alternativeName>
        <fullName evidence="7">eIF-4F 25 kDa subunit</fullName>
    </alternativeName>
    <alternativeName>
        <fullName evidence="7">eIF-4F p26 subunit</fullName>
    </alternativeName>
    <alternativeName>
        <fullName evidence="6">mRNA cap-binding protein</fullName>
    </alternativeName>
</protein>
<accession>A0A2J6L8Y7</accession>
<accession>Q7XJB1</accession>
<keyword id="KW-0963">Cytoplasm</keyword>
<keyword id="KW-1015">Disulfide bond</keyword>
<keyword id="KW-0945">Host-virus interaction</keyword>
<keyword id="KW-0396">Initiation factor</keyword>
<keyword id="KW-0539">Nucleus</keyword>
<keyword id="KW-0611">Plant defense</keyword>
<keyword id="KW-0648">Protein biosynthesis</keyword>
<keyword id="KW-0694">RNA-binding</keyword>
<keyword id="KW-0810">Translation regulation</keyword>
<name>IF4E1_LACSA</name>
<reference key="1">
    <citation type="journal article" date="2003" name="Plant Physiol.">
        <title>The eukaryotic translation initiation factor 4E controls lettuce susceptibility to the Potyvirus Lettuce mosaic virus.</title>
        <authorList>
            <person name="Nicaise V."/>
            <person name="German-Retana S."/>
            <person name="Sanjuan R."/>
            <person name="Dubrana M.-P."/>
            <person name="Mazier M."/>
            <person name="Maisonneuve B."/>
            <person name="Candresse T."/>
            <person name="Caranta C."/>
            <person name="LeGall O."/>
        </authorList>
    </citation>
    <scope>NUCLEOTIDE SEQUENCE [MRNA]</scope>
    <scope>FUNCTION</scope>
    <scope>FUNCTION (MICROBIAL INFECTION)</scope>
    <scope>VARIANTS PRO-75; 113-GLN--ALA-115 DELINS HIS AND SER-191</scope>
    <scope>SUBUNIT (MICROBIAL INFECTION)</scope>
    <scope>POLYMORPHISM</scope>
    <source>
        <strain>cv. 87-20M</strain>
        <strain>cv. Floribibb</strain>
        <strain>cv. Malika</strain>
        <strain>cv. Mantilia</strain>
        <strain>cv. Salinas</strain>
        <strain>cv. Salinas 88</strain>
        <strain>cv. Vanguard</strain>
        <strain>cv. Vanguard 75</strain>
    </source>
</reference>
<reference key="2">
    <citation type="journal article" date="2017" name="Nat. Commun.">
        <title>Genome assembly with in vitro proximity ligation data and whole-genome triplication in lettuce.</title>
        <authorList>
            <person name="Reyes-Chin-Wo S."/>
            <person name="Wang Z."/>
            <person name="Yang X."/>
            <person name="Kozik A."/>
            <person name="Arikit S."/>
            <person name="Song C."/>
            <person name="Xia L."/>
            <person name="Froenicke L."/>
            <person name="Lavelle D.O."/>
            <person name="Truco M.J."/>
            <person name="Xia R."/>
            <person name="Zhu S."/>
            <person name="Xu C."/>
            <person name="Xu H."/>
            <person name="Xu X."/>
            <person name="Cox K."/>
            <person name="Korf I."/>
            <person name="Meyers B.C."/>
            <person name="Michelmore R.W."/>
        </authorList>
    </citation>
    <scope>NUCLEOTIDE SEQUENCE [LARGE SCALE GENOMIC DNA]</scope>
    <source>
        <strain>cv. Salinas</strain>
    </source>
</reference>
<reference key="3">
    <citation type="journal article" date="2014" name="Infect. Genet. Evol.">
        <title>Evolution of plant eukaryotic initiation factor 4E (eIF4E) and potyvirus genome-linked protein (VPg): a game of mirrors impacting resistance spectrum and durability.</title>
        <authorList>
            <person name="Moury B."/>
            <person name="Charron C."/>
            <person name="Janzac B."/>
            <person name="Simon V."/>
            <person name="Gallois J.L."/>
            <person name="Palloix A."/>
            <person name="Caranta C."/>
        </authorList>
    </citation>
    <scope>GENE FAMILY</scope>
    <scope>REVIEW</scope>
</reference>
<dbReference type="EMBL" id="AF530162">
    <property type="protein sequence ID" value="AAP86602.1"/>
    <property type="molecule type" value="mRNA"/>
</dbReference>
<dbReference type="EMBL" id="NBSK01004716">
    <property type="protein sequence ID" value="PLY83747.1"/>
    <property type="molecule type" value="Genomic_DNA"/>
</dbReference>
<dbReference type="SMR" id="A0A2J6L8Y7"/>
<dbReference type="STRING" id="4236.A0A2J6L8Y7"/>
<dbReference type="EnsemblPlants" id="rna-gnl|WGS:NBSK|LSAT_4X27581_mrna">
    <property type="protein sequence ID" value="cds-PLY83747.1"/>
    <property type="gene ID" value="gene-LSAT_4X27581"/>
</dbReference>
<dbReference type="Gramene" id="rna-gnl|WGS:NBSK|LSAT_4X27581_mrna">
    <property type="protein sequence ID" value="cds-PLY83747.1"/>
    <property type="gene ID" value="gene-LSAT_4X27581"/>
</dbReference>
<dbReference type="OrthoDB" id="590761at2759"/>
<dbReference type="GO" id="GO:0005737">
    <property type="term" value="C:cytoplasm"/>
    <property type="evidence" value="ECO:0000250"/>
    <property type="project" value="UniProtKB"/>
</dbReference>
<dbReference type="GO" id="GO:0005634">
    <property type="term" value="C:nucleus"/>
    <property type="evidence" value="ECO:0000250"/>
    <property type="project" value="UniProtKB"/>
</dbReference>
<dbReference type="GO" id="GO:0003723">
    <property type="term" value="F:RNA binding"/>
    <property type="evidence" value="ECO:0000250"/>
    <property type="project" value="UniProtKB"/>
</dbReference>
<dbReference type="GO" id="GO:0003743">
    <property type="term" value="F:translation initiation factor activity"/>
    <property type="evidence" value="ECO:0000250"/>
    <property type="project" value="UniProtKB"/>
</dbReference>
<dbReference type="GO" id="GO:0051607">
    <property type="term" value="P:defense response to virus"/>
    <property type="evidence" value="ECO:0000250"/>
    <property type="project" value="UniProtKB"/>
</dbReference>
<dbReference type="GO" id="GO:0006417">
    <property type="term" value="P:regulation of translation"/>
    <property type="evidence" value="ECO:0007669"/>
    <property type="project" value="UniProtKB-KW"/>
</dbReference>
<dbReference type="GO" id="GO:0006413">
    <property type="term" value="P:translational initiation"/>
    <property type="evidence" value="ECO:0000250"/>
    <property type="project" value="UniProtKB"/>
</dbReference>
<dbReference type="FunFam" id="3.30.760.10:FF:000003">
    <property type="entry name" value="Eukaryotic translation initiation factor 4E"/>
    <property type="match status" value="1"/>
</dbReference>
<dbReference type="Gene3D" id="3.30.760.10">
    <property type="entry name" value="RNA Cap, Translation Initiation Factor Eif4e"/>
    <property type="match status" value="1"/>
</dbReference>
<dbReference type="InterPro" id="IPR023398">
    <property type="entry name" value="TIF_eIF4e-like"/>
</dbReference>
<dbReference type="InterPro" id="IPR001040">
    <property type="entry name" value="TIF_eIF_4E"/>
</dbReference>
<dbReference type="InterPro" id="IPR019770">
    <property type="entry name" value="TIF_eIF_4E_CS"/>
</dbReference>
<dbReference type="PANTHER" id="PTHR11960">
    <property type="entry name" value="EUKARYOTIC TRANSLATION INITIATION FACTOR 4E RELATED"/>
    <property type="match status" value="1"/>
</dbReference>
<dbReference type="PANTHER" id="PTHR11960:SF8">
    <property type="entry name" value="EUKARYOTIC TRANSLATION INITIATION FACTOR 4E1-RELATED"/>
    <property type="match status" value="1"/>
</dbReference>
<dbReference type="Pfam" id="PF01652">
    <property type="entry name" value="IF4E"/>
    <property type="match status" value="1"/>
</dbReference>
<dbReference type="SUPFAM" id="SSF55418">
    <property type="entry name" value="eIF4e-like"/>
    <property type="match status" value="1"/>
</dbReference>
<dbReference type="PROSITE" id="PS00813">
    <property type="entry name" value="IF4E"/>
    <property type="match status" value="1"/>
</dbReference>
<organism>
    <name type="scientific">Lactuca sativa</name>
    <name type="common">Garden lettuce</name>
    <dbReference type="NCBI Taxonomy" id="4236"/>
    <lineage>
        <taxon>Eukaryota</taxon>
        <taxon>Viridiplantae</taxon>
        <taxon>Streptophyta</taxon>
        <taxon>Embryophyta</taxon>
        <taxon>Tracheophyta</taxon>
        <taxon>Spermatophyta</taxon>
        <taxon>Magnoliopsida</taxon>
        <taxon>eudicotyledons</taxon>
        <taxon>Gunneridae</taxon>
        <taxon>Pentapetalae</taxon>
        <taxon>asterids</taxon>
        <taxon>campanulids</taxon>
        <taxon>Asterales</taxon>
        <taxon>Asteraceae</taxon>
        <taxon>Cichorioideae</taxon>
        <taxon>Cichorieae</taxon>
        <taxon>Lactucinae</taxon>
        <taxon>Lactuca</taxon>
    </lineage>
</organism>